<gene>
    <name evidence="1" type="primary">ccsA</name>
    <name type="ordered locus">Heak452_Cp090</name>
</gene>
<name>CCSA_HETA4</name>
<dbReference type="EMBL" id="EU168191">
    <property type="protein sequence ID" value="ABV70138.1"/>
    <property type="molecule type" value="Genomic_DNA"/>
</dbReference>
<dbReference type="RefSeq" id="YP_001936391.1">
    <property type="nucleotide sequence ID" value="NC_010772.1"/>
</dbReference>
<dbReference type="SMR" id="B2XTQ5"/>
<dbReference type="GeneID" id="6335543"/>
<dbReference type="GO" id="GO:0009535">
    <property type="term" value="C:chloroplast thylakoid membrane"/>
    <property type="evidence" value="ECO:0007669"/>
    <property type="project" value="UniProtKB-SubCell"/>
</dbReference>
<dbReference type="GO" id="GO:0005886">
    <property type="term" value="C:plasma membrane"/>
    <property type="evidence" value="ECO:0007669"/>
    <property type="project" value="TreeGrafter"/>
</dbReference>
<dbReference type="GO" id="GO:0020037">
    <property type="term" value="F:heme binding"/>
    <property type="evidence" value="ECO:0007669"/>
    <property type="project" value="InterPro"/>
</dbReference>
<dbReference type="GO" id="GO:0017004">
    <property type="term" value="P:cytochrome complex assembly"/>
    <property type="evidence" value="ECO:0007669"/>
    <property type="project" value="UniProtKB-UniRule"/>
</dbReference>
<dbReference type="HAMAP" id="MF_01391">
    <property type="entry name" value="CytC_CcsA"/>
    <property type="match status" value="1"/>
</dbReference>
<dbReference type="InterPro" id="IPR002541">
    <property type="entry name" value="Cyt_c_assembly"/>
</dbReference>
<dbReference type="InterPro" id="IPR017562">
    <property type="entry name" value="Cyt_c_biogenesis_CcsA"/>
</dbReference>
<dbReference type="InterPro" id="IPR045062">
    <property type="entry name" value="Cyt_c_biogenesis_CcsA/CcmC"/>
</dbReference>
<dbReference type="NCBIfam" id="TIGR03144">
    <property type="entry name" value="cytochr_II_ccsB"/>
    <property type="match status" value="1"/>
</dbReference>
<dbReference type="PANTHER" id="PTHR30071:SF1">
    <property type="entry name" value="CYTOCHROME B_B6 PROTEIN-RELATED"/>
    <property type="match status" value="1"/>
</dbReference>
<dbReference type="PANTHER" id="PTHR30071">
    <property type="entry name" value="HEME EXPORTER PROTEIN C"/>
    <property type="match status" value="1"/>
</dbReference>
<dbReference type="Pfam" id="PF01578">
    <property type="entry name" value="Cytochrom_C_asm"/>
    <property type="match status" value="1"/>
</dbReference>
<geneLocation type="chloroplast"/>
<organism>
    <name type="scientific">Heterosigma akashiwo (strain CCMP452 / OLISTH)</name>
    <dbReference type="NCBI Taxonomy" id="536046"/>
    <lineage>
        <taxon>Eukaryota</taxon>
        <taxon>Sar</taxon>
        <taxon>Stramenopiles</taxon>
        <taxon>Ochrophyta</taxon>
        <taxon>Raphidophyceae</taxon>
        <taxon>Chattonellales</taxon>
        <taxon>Chattonellaceae</taxon>
        <taxon>Heterosigma</taxon>
    </lineage>
</organism>
<reference key="1">
    <citation type="journal article" date="2008" name="BMC Genomics">
        <title>Chloroplast genome sequencing analysis of Heterosigma akashiwo CCMP452 (West Atlantic) and NIES293 (West Pacific) strains.</title>
        <authorList>
            <person name="Cattolico R.A."/>
            <person name="Jacobs M.A."/>
            <person name="Zhou Y."/>
            <person name="Chang J."/>
            <person name="Duplessis M."/>
            <person name="Lybrand T."/>
            <person name="McKay J."/>
            <person name="Ong H.C."/>
            <person name="Sims E."/>
            <person name="Rocap G."/>
        </authorList>
    </citation>
    <scope>NUCLEOTIDE SEQUENCE [LARGE SCALE GENOMIC DNA]</scope>
</reference>
<sequence length="322" mass="37094">MHTSIVTLNLDAYQNFLANAIFCNLLLTMCLYWFSLIIVNNNLICNLAKFSAVNSNVILFFYLSWRWYNYNFFPLSNLYESLMFLSCLLLFIYQFIEFKTRSRVIGALVLPLIVLVQGFASLSLPTAMQKSSPLVPALQSNWLMLHVSMMMLSYATLLLGSLFSILYLVLYKDKKILTKKSIKEQFVEENFVFQLTTSAFSLNQTSNIITEAKTDRQRLILSLDNWSYRTIGIGFPFLTMGIISGAVWANEAWGSYWSWDPKETWALITWLIFASYLHARLTKGWRGKRAAFLGSFGFFIVWVCYLGVNFLGKGLHSYGFLN</sequence>
<keyword id="KW-0150">Chloroplast</keyword>
<keyword id="KW-0201">Cytochrome c-type biogenesis</keyword>
<keyword id="KW-0472">Membrane</keyword>
<keyword id="KW-0934">Plastid</keyword>
<keyword id="KW-0793">Thylakoid</keyword>
<keyword id="KW-0812">Transmembrane</keyword>
<keyword id="KW-1133">Transmembrane helix</keyword>
<protein>
    <recommendedName>
        <fullName evidence="1">Cytochrome c biogenesis protein CcsA</fullName>
    </recommendedName>
</protein>
<comment type="function">
    <text evidence="1">Required during biogenesis of c-type cytochromes (cytochrome c6 and cytochrome f) at the step of heme attachment.</text>
</comment>
<comment type="subunit">
    <text evidence="1">May interact with Ccs1.</text>
</comment>
<comment type="subcellular location">
    <subcellularLocation>
        <location evidence="1">Plastid</location>
        <location evidence="1">Chloroplast thylakoid membrane</location>
        <topology evidence="1">Multi-pass membrane protein</topology>
    </subcellularLocation>
</comment>
<comment type="similarity">
    <text evidence="1">Belongs to the CcmF/CycK/Ccl1/NrfE/CcsA family.</text>
</comment>
<proteinExistence type="inferred from homology"/>
<feature type="chain" id="PRO_0000353794" description="Cytochrome c biogenesis protein CcsA">
    <location>
        <begin position="1"/>
        <end position="322"/>
    </location>
</feature>
<feature type="transmembrane region" description="Helical" evidence="1">
    <location>
        <begin position="19"/>
        <end position="39"/>
    </location>
</feature>
<feature type="transmembrane region" description="Helical" evidence="1">
    <location>
        <begin position="43"/>
        <end position="63"/>
    </location>
</feature>
<feature type="transmembrane region" description="Helical" evidence="1">
    <location>
        <begin position="72"/>
        <end position="92"/>
    </location>
</feature>
<feature type="transmembrane region" description="Helical" evidence="1">
    <location>
        <begin position="104"/>
        <end position="124"/>
    </location>
</feature>
<feature type="transmembrane region" description="Helical" evidence="1">
    <location>
        <begin position="150"/>
        <end position="170"/>
    </location>
</feature>
<feature type="transmembrane region" description="Helical" evidence="1">
    <location>
        <begin position="230"/>
        <end position="250"/>
    </location>
</feature>
<feature type="transmembrane region" description="Helical" evidence="1">
    <location>
        <begin position="264"/>
        <end position="281"/>
    </location>
</feature>
<feature type="transmembrane region" description="Helical" evidence="1">
    <location>
        <begin position="291"/>
        <end position="311"/>
    </location>
</feature>
<evidence type="ECO:0000255" key="1">
    <source>
        <dbReference type="HAMAP-Rule" id="MF_01391"/>
    </source>
</evidence>
<accession>B2XTQ5</accession>